<feature type="signal peptide" evidence="5">
    <location>
        <begin position="1"/>
        <end position="18"/>
    </location>
</feature>
<feature type="chain" id="PRO_5004190132" description="Hemolin" evidence="5">
    <location>
        <begin position="19"/>
        <end position="413"/>
    </location>
</feature>
<feature type="domain" description="Ig-like C2-type 1" evidence="2">
    <location>
        <begin position="25"/>
        <end position="112"/>
    </location>
</feature>
<feature type="domain" description="Ig-like C2-type 2" evidence="2">
    <location>
        <begin position="122"/>
        <end position="211"/>
    </location>
</feature>
<feature type="domain" description="Ig-like C2-type 3" evidence="2">
    <location>
        <begin position="233"/>
        <end position="322"/>
    </location>
</feature>
<feature type="domain" description="Ig-like C2-type 4" evidence="2">
    <location>
        <begin position="327"/>
        <end position="413"/>
    </location>
</feature>
<feature type="glycosylation site" description="N-linked (GlcNAc...) asparagine" evidence="3">
    <location>
        <position position="283"/>
    </location>
</feature>
<feature type="disulfide bond" evidence="1">
    <location>
        <begin position="46"/>
        <end position="97"/>
    </location>
</feature>
<feature type="disulfide bond" evidence="1">
    <location>
        <begin position="140"/>
        <end position="199"/>
    </location>
</feature>
<feature type="disulfide bond" evidence="1">
    <location>
        <begin position="252"/>
        <end position="305"/>
    </location>
</feature>
<feature type="disulfide bond" evidence="1">
    <location>
        <begin position="349"/>
        <end position="395"/>
    </location>
</feature>
<sequence length="413" mass="45114">MASKSLVVLSACIIIGSAVPVEKLPVLKSQPAEVLFRESQPTVLECIIEGQEEGVKYTWTKDGKDFKWTEHNAAQRTNEGSLVFLSPQPSDEGHYQCFAQTAAGVASSRVISFKRTYLVAEPAKTHEKTPVEGKPFQLDCVIPNAYPKPEIFWKKSLSGADPNADSANLGRRVTAGPDGNLYFTTVEKEDVSDIYKYVCVAKSPAHDGEVRLVEYIIKEVTKDTSGYKGELVPQYLSKDIVAKVGSVTMIYCMYGGKPQGFPDYFKDGKDVNGDAGGRITRHNRTSGKRLLIKETLLEDQGTYTCEESNGVGKPVKHSLKVTVVSAPKYVKSPEKVIIAKQGQDVTIPCQVTGLPAPKVTWTHNAQPLSGGKTTVTESGLIIKGLQKGDKGYYGCRSTNEHGDEYVETLVQVN</sequence>
<protein>
    <recommendedName>
        <fullName evidence="6">Hemolin</fullName>
        <ecNumber>3.4.21.-</ecNumber>
    </recommendedName>
    <alternativeName>
        <fullName evidence="6">Lonomia obliqua Stuart factor activator</fullName>
        <shortName evidence="6">Losac</shortName>
    </alternativeName>
</protein>
<comment type="function">
    <text evidence="4 5">Bristle toxin involved in caterpillar defense by participating in hemorrhagic syndrome characterized by a consumptive coagulopathy (PubMed:21177860). Exhibits procoagulant activity through selective factor X proteolytic activation (PubMed:21177860). Activates factor X in a dose- and time-dependent manner but does not activate gamma-carboxyglutamic acid domainless factor X (PubMed:21177860). Its activity does not depend on calcium ions (PubMed:21177860). Also functions as a growth stimulator and an inhibitor of cellular death for endothelial cells (PubMed:16597435). In vitro, increases proliferation of human umbilical vein endothelial cells (HUVEC) and inhibits the apoptosis induced by starvation (PubMed:16597435). Also increases slightly the complement decay-accelerating factor (CD55), which protects cells from complement-mediated lysis (PubMed:16597435). On the other hand, does not alter the release or expression of von Willebrand factor (VWF), tissue factor (F3), intercellular adhesion molecule-1 (ICAM1), interleukin-8 (CXCL8), and prostacyclin (PubMed:16597435). Does not show fibrinolytic or fibrinogenolytic activities (PubMed:21177860).</text>
</comment>
<comment type="activity regulation">
    <text evidence="5">Increased activity in presence of phospholipids (low concentrations) and calcium ions. Inhibited by PMSF. Not affected by EDTA and E-64.</text>
</comment>
<comment type="biophysicochemical properties">
    <kinetics>
        <KM evidence="5">188 nM for factor X in presence of phospholipids and calcium ions</KM>
    </kinetics>
</comment>
<comment type="subcellular location">
    <subcellularLocation>
        <location evidence="7">Secreted</location>
    </subcellularLocation>
</comment>
<comment type="tissue specificity">
    <text evidence="5">Expressed in larval bristles.</text>
</comment>
<comment type="developmental stage">
    <text evidence="5">Larvae.</text>
</comment>
<comment type="miscellaneous">
    <text evidence="5">The recombinant protein is recognized by an antilonomic horse hyperimmune serum.</text>
</comment>
<comment type="similarity">
    <text evidence="7">Belongs to the hemolin family.</text>
</comment>
<comment type="caution">
    <text evidence="5">Has no homology to any known proteases.</text>
</comment>
<proteinExistence type="evidence at protein level"/>
<accession>Q1HLC0</accession>
<dbReference type="EC" id="3.4.21.-"/>
<dbReference type="EMBL" id="DQ479435">
    <property type="protein sequence ID" value="ABF21073.1"/>
    <property type="molecule type" value="mRNA"/>
</dbReference>
<dbReference type="SMR" id="Q1HLC0"/>
<dbReference type="GO" id="GO:0005576">
    <property type="term" value="C:extracellular region"/>
    <property type="evidence" value="ECO:0007669"/>
    <property type="project" value="UniProtKB-SubCell"/>
</dbReference>
<dbReference type="GO" id="GO:0005886">
    <property type="term" value="C:plasma membrane"/>
    <property type="evidence" value="ECO:0007669"/>
    <property type="project" value="TreeGrafter"/>
</dbReference>
<dbReference type="GO" id="GO:0008236">
    <property type="term" value="F:serine-type peptidase activity"/>
    <property type="evidence" value="ECO:0007669"/>
    <property type="project" value="UniProtKB-KW"/>
</dbReference>
<dbReference type="GO" id="GO:0090729">
    <property type="term" value="F:toxin activity"/>
    <property type="evidence" value="ECO:0007669"/>
    <property type="project" value="UniProtKB-KW"/>
</dbReference>
<dbReference type="GO" id="GO:0007156">
    <property type="term" value="P:homophilic cell adhesion via plasma membrane adhesion molecules"/>
    <property type="evidence" value="ECO:0007669"/>
    <property type="project" value="TreeGrafter"/>
</dbReference>
<dbReference type="GO" id="GO:0006508">
    <property type="term" value="P:proteolysis"/>
    <property type="evidence" value="ECO:0007669"/>
    <property type="project" value="UniProtKB-KW"/>
</dbReference>
<dbReference type="CDD" id="cd20979">
    <property type="entry name" value="IgI_1_hemolin-like"/>
    <property type="match status" value="1"/>
</dbReference>
<dbReference type="CDD" id="cd20978">
    <property type="entry name" value="IgI_4_hemolin-like"/>
    <property type="match status" value="1"/>
</dbReference>
<dbReference type="FunFam" id="2.60.40.10:FF:000032">
    <property type="entry name" value="palladin isoform X1"/>
    <property type="match status" value="1"/>
</dbReference>
<dbReference type="Gene3D" id="2.60.40.10">
    <property type="entry name" value="Immunoglobulins"/>
    <property type="match status" value="4"/>
</dbReference>
<dbReference type="InterPro" id="IPR050958">
    <property type="entry name" value="Cell_Adh-Cytoskel_Orgn"/>
</dbReference>
<dbReference type="InterPro" id="IPR007110">
    <property type="entry name" value="Ig-like_dom"/>
</dbReference>
<dbReference type="InterPro" id="IPR036179">
    <property type="entry name" value="Ig-like_dom_sf"/>
</dbReference>
<dbReference type="InterPro" id="IPR013783">
    <property type="entry name" value="Ig-like_fold"/>
</dbReference>
<dbReference type="InterPro" id="IPR013098">
    <property type="entry name" value="Ig_I-set"/>
</dbReference>
<dbReference type="InterPro" id="IPR003599">
    <property type="entry name" value="Ig_sub"/>
</dbReference>
<dbReference type="InterPro" id="IPR003598">
    <property type="entry name" value="Ig_sub2"/>
</dbReference>
<dbReference type="PANTHER" id="PTHR45080">
    <property type="entry name" value="CONTACTIN 5"/>
    <property type="match status" value="1"/>
</dbReference>
<dbReference type="PANTHER" id="PTHR45080:SF8">
    <property type="entry name" value="IG-LIKE DOMAIN-CONTAINING PROTEIN"/>
    <property type="match status" value="1"/>
</dbReference>
<dbReference type="Pfam" id="PF07679">
    <property type="entry name" value="I-set"/>
    <property type="match status" value="2"/>
</dbReference>
<dbReference type="Pfam" id="PF13927">
    <property type="entry name" value="Ig_3"/>
    <property type="match status" value="1"/>
</dbReference>
<dbReference type="PIRSF" id="PIRSF000615">
    <property type="entry name" value="TyrPK_CSF1-R"/>
    <property type="match status" value="1"/>
</dbReference>
<dbReference type="SMART" id="SM00409">
    <property type="entry name" value="IG"/>
    <property type="match status" value="4"/>
</dbReference>
<dbReference type="SMART" id="SM00408">
    <property type="entry name" value="IGc2"/>
    <property type="match status" value="4"/>
</dbReference>
<dbReference type="SUPFAM" id="SSF48726">
    <property type="entry name" value="Immunoglobulin"/>
    <property type="match status" value="4"/>
</dbReference>
<dbReference type="PROSITE" id="PS50835">
    <property type="entry name" value="IG_LIKE"/>
    <property type="match status" value="4"/>
</dbReference>
<evidence type="ECO:0000250" key="1">
    <source>
        <dbReference type="UniProtKB" id="P25033"/>
    </source>
</evidence>
<evidence type="ECO:0000255" key="2"/>
<evidence type="ECO:0000255" key="3">
    <source>
        <dbReference type="PROSITE-ProRule" id="PRU00498"/>
    </source>
</evidence>
<evidence type="ECO:0000269" key="4">
    <source>
    </source>
</evidence>
<evidence type="ECO:0000269" key="5">
    <source>
    </source>
</evidence>
<evidence type="ECO:0000303" key="6">
    <source>
    </source>
</evidence>
<evidence type="ECO:0000305" key="7"/>
<keyword id="KW-1204">Blood coagulation cascade activating toxin</keyword>
<keyword id="KW-1015">Disulfide bond</keyword>
<keyword id="KW-0325">Glycoprotein</keyword>
<keyword id="KW-1199">Hemostasis impairing toxin</keyword>
<keyword id="KW-0378">Hydrolase</keyword>
<keyword id="KW-0393">Immunoglobulin domain</keyword>
<keyword id="KW-0645">Protease</keyword>
<keyword id="KW-0677">Repeat</keyword>
<keyword id="KW-0964">Secreted</keyword>
<keyword id="KW-0720">Serine protease</keyword>
<keyword id="KW-0732">Signal</keyword>
<keyword id="KW-0800">Toxin</keyword>
<reference key="1">
    <citation type="journal article" date="2011" name="J. Biol. Chem.">
        <title>Losac, the first hemolin that exhibits procoagulant activity through selective factor X proteolytic activation.</title>
        <authorList>
            <person name="Alvarez-Flores M.P."/>
            <person name="Furlin D."/>
            <person name="Ramos O.H."/>
            <person name="Balan A."/>
            <person name="Konno K."/>
            <person name="Chudzinski-Tavassi A.M."/>
        </authorList>
    </citation>
    <scope>NUCLEOTIDE SEQUENCE [MRNA]</scope>
    <scope>FUNCTION</scope>
    <scope>BIOPHYSICOCHEMICAL PROPERTIES</scope>
    <scope>IDENTIFICATION BY MASS SPECTROMETRY</scope>
    <scope>3D-STRUCTURE MODELING</scope>
    <scope>RECOMBINANT EXPRESSION</scope>
</reference>
<reference key="2">
    <citation type="journal article" date="2006" name="Biochem. Biophys. Res. Commun.">
        <title>Losac, a factor X activator from Lonomia obliqua bristle extract: its role in the pathophysiological mechanisms and cell survival.</title>
        <authorList>
            <person name="Alvarez Flores M.P."/>
            <person name="Fritzen M."/>
            <person name="Reis C.V."/>
            <person name="Chudzinski-Tavassi A.M."/>
        </authorList>
    </citation>
    <scope>FUNCTION</scope>
    <source>
        <tissue>Larval bristle</tissue>
    </source>
</reference>
<organism>
    <name type="scientific">Lonomia obliqua</name>
    <name type="common">Moth</name>
    <dbReference type="NCBI Taxonomy" id="304329"/>
    <lineage>
        <taxon>Eukaryota</taxon>
        <taxon>Metazoa</taxon>
        <taxon>Ecdysozoa</taxon>
        <taxon>Arthropoda</taxon>
        <taxon>Hexapoda</taxon>
        <taxon>Insecta</taxon>
        <taxon>Pterygota</taxon>
        <taxon>Neoptera</taxon>
        <taxon>Endopterygota</taxon>
        <taxon>Lepidoptera</taxon>
        <taxon>Glossata</taxon>
        <taxon>Ditrysia</taxon>
        <taxon>Bombycoidea</taxon>
        <taxon>Saturniidae</taxon>
        <taxon>Hemileucinae</taxon>
        <taxon>Lonomia</taxon>
    </lineage>
</organism>
<name>LOSAC_LONON</name>